<reference key="1">
    <citation type="submission" date="2006-12" db="EMBL/GenBank/DDBJ databases">
        <title>Complete sequence of chromosome of Mycobacterium sp. KMS.</title>
        <authorList>
            <consortium name="US DOE Joint Genome Institute"/>
            <person name="Copeland A."/>
            <person name="Lucas S."/>
            <person name="Lapidus A."/>
            <person name="Barry K."/>
            <person name="Detter J.C."/>
            <person name="Glavina del Rio T."/>
            <person name="Hammon N."/>
            <person name="Israni S."/>
            <person name="Dalin E."/>
            <person name="Tice H."/>
            <person name="Pitluck S."/>
            <person name="Kiss H."/>
            <person name="Brettin T."/>
            <person name="Bruce D."/>
            <person name="Han C."/>
            <person name="Tapia R."/>
            <person name="Gilna P."/>
            <person name="Schmutz J."/>
            <person name="Larimer F."/>
            <person name="Land M."/>
            <person name="Hauser L."/>
            <person name="Kyrpides N."/>
            <person name="Mikhailova N."/>
            <person name="Miller C.D."/>
            <person name="Richardson P."/>
        </authorList>
    </citation>
    <scope>NUCLEOTIDE SEQUENCE [LARGE SCALE GENOMIC DNA]</scope>
    <source>
        <strain>KMS</strain>
    </source>
</reference>
<evidence type="ECO:0000255" key="1">
    <source>
        <dbReference type="HAMAP-Rule" id="MF_01697"/>
    </source>
</evidence>
<proteinExistence type="inferred from homology"/>
<sequence length="415" mass="45517">MESWSAPEVPALPGRGPQLRLYDSADRQVRPVSAGDTATMYVCGITPYDATHLGHAATYLAFDLVHRLWLDAGHRVHYVQNITDVDDPLFERAARDGIDWRDLGAREIQLFREDMAALRVLPPHDYVAATDAIAEVIELVEKMLASGAAYVVDDPEFPDVYYRADATVQFGYESNYDHETMLTLFAERGGDPDRAGKADELDALLWRAERPGEPSWPSPFGPGRPGWHVECAAIALSRIGTGLDIQGGGSDLIFPHHEFSAAHAESVTGERRFARHYVHAGMIGWDGHKMSKSRGNLVLVSRLRAEGVDPSAIRLGLLAGHYREDRFWSDDVLSDAQTRLQRWRRATSLPTGPDATDVLARVRTYLADDLDTPKALIALDAWCTEALDGGGSDVTAPKTVATAVDALLGVALPVE</sequence>
<feature type="chain" id="PRO_0000400464" description="L-cysteine:1D-myo-inositol 2-amino-2-deoxy-alpha-D-glucopyranoside ligase">
    <location>
        <begin position="1"/>
        <end position="415"/>
    </location>
</feature>
<feature type="short sequence motif" description="'HIGH' region" evidence="1">
    <location>
        <begin position="45"/>
        <end position="55"/>
    </location>
</feature>
<feature type="short sequence motif" description="'ERGGDP' region" evidence="1">
    <location>
        <begin position="187"/>
        <end position="192"/>
    </location>
</feature>
<feature type="short sequence motif" description="'KMSKS' region" evidence="1">
    <location>
        <begin position="289"/>
        <end position="293"/>
    </location>
</feature>
<feature type="binding site" evidence="1">
    <location>
        <begin position="43"/>
        <end position="46"/>
    </location>
    <ligand>
        <name>L-cysteinyl-5'-AMP</name>
        <dbReference type="ChEBI" id="CHEBI:144924"/>
    </ligand>
</feature>
<feature type="binding site" evidence="1">
    <location>
        <position position="43"/>
    </location>
    <ligand>
        <name>Zn(2+)</name>
        <dbReference type="ChEBI" id="CHEBI:29105"/>
    </ligand>
</feature>
<feature type="binding site" evidence="1">
    <location>
        <position position="58"/>
    </location>
    <ligand>
        <name>L-cysteinyl-5'-AMP</name>
        <dbReference type="ChEBI" id="CHEBI:144924"/>
    </ligand>
</feature>
<feature type="binding site" evidence="1">
    <location>
        <begin position="81"/>
        <end position="83"/>
    </location>
    <ligand>
        <name>L-cysteinyl-5'-AMP</name>
        <dbReference type="ChEBI" id="CHEBI:144924"/>
    </ligand>
</feature>
<feature type="binding site" evidence="1">
    <location>
        <position position="227"/>
    </location>
    <ligand>
        <name>L-cysteinyl-5'-AMP</name>
        <dbReference type="ChEBI" id="CHEBI:144924"/>
    </ligand>
</feature>
<feature type="binding site" evidence="1">
    <location>
        <position position="231"/>
    </location>
    <ligand>
        <name>Zn(2+)</name>
        <dbReference type="ChEBI" id="CHEBI:29105"/>
    </ligand>
</feature>
<feature type="binding site" evidence="1">
    <location>
        <begin position="249"/>
        <end position="251"/>
    </location>
    <ligand>
        <name>L-cysteinyl-5'-AMP</name>
        <dbReference type="ChEBI" id="CHEBI:144924"/>
    </ligand>
</feature>
<feature type="binding site" evidence="1">
    <location>
        <position position="256"/>
    </location>
    <ligand>
        <name>Zn(2+)</name>
        <dbReference type="ChEBI" id="CHEBI:29105"/>
    </ligand>
</feature>
<feature type="binding site" evidence="1">
    <location>
        <position position="283"/>
    </location>
    <ligand>
        <name>L-cysteinyl-5'-AMP</name>
        <dbReference type="ChEBI" id="CHEBI:144924"/>
    </ligand>
</feature>
<organism>
    <name type="scientific">Mycobacterium sp. (strain KMS)</name>
    <dbReference type="NCBI Taxonomy" id="189918"/>
    <lineage>
        <taxon>Bacteria</taxon>
        <taxon>Bacillati</taxon>
        <taxon>Actinomycetota</taxon>
        <taxon>Actinomycetes</taxon>
        <taxon>Mycobacteriales</taxon>
        <taxon>Mycobacteriaceae</taxon>
        <taxon>Mycobacterium</taxon>
    </lineage>
</organism>
<protein>
    <recommendedName>
        <fullName evidence="1">L-cysteine:1D-myo-inositol 2-amino-2-deoxy-alpha-D-glucopyranoside ligase</fullName>
        <shortName evidence="1">L-Cys:GlcN-Ins ligase</shortName>
        <ecNumber evidence="1">6.3.1.13</ecNumber>
    </recommendedName>
    <alternativeName>
        <fullName evidence="1">Mycothiol ligase</fullName>
        <shortName evidence="1">MSH ligase</shortName>
    </alternativeName>
</protein>
<accession>A1UHV1</accession>
<gene>
    <name evidence="1" type="primary">mshC</name>
    <name type="ordered locus">Mkms_3215</name>
</gene>
<comment type="function">
    <text evidence="1">Catalyzes the ATP-dependent condensation of GlcN-Ins and L-cysteine to form L-Cys-GlcN-Ins.</text>
</comment>
<comment type="catalytic activity">
    <reaction evidence="1">
        <text>1D-myo-inositol 2-amino-2-deoxy-alpha-D-glucopyranoside + L-cysteine + ATP = 1D-myo-inositol 2-(L-cysteinylamino)-2-deoxy-alpha-D-glucopyranoside + AMP + diphosphate + H(+)</text>
        <dbReference type="Rhea" id="RHEA:26176"/>
        <dbReference type="ChEBI" id="CHEBI:15378"/>
        <dbReference type="ChEBI" id="CHEBI:30616"/>
        <dbReference type="ChEBI" id="CHEBI:33019"/>
        <dbReference type="ChEBI" id="CHEBI:35235"/>
        <dbReference type="ChEBI" id="CHEBI:58886"/>
        <dbReference type="ChEBI" id="CHEBI:58887"/>
        <dbReference type="ChEBI" id="CHEBI:456215"/>
        <dbReference type="EC" id="6.3.1.13"/>
    </reaction>
</comment>
<comment type="cofactor">
    <cofactor evidence="1">
        <name>Zn(2+)</name>
        <dbReference type="ChEBI" id="CHEBI:29105"/>
    </cofactor>
    <text evidence="1">Binds 1 zinc ion per subunit.</text>
</comment>
<comment type="subunit">
    <text evidence="1">Monomer.</text>
</comment>
<comment type="similarity">
    <text evidence="1">Belongs to the class-I aminoacyl-tRNA synthetase family. MshC subfamily.</text>
</comment>
<dbReference type="EC" id="6.3.1.13" evidence="1"/>
<dbReference type="EMBL" id="CP000518">
    <property type="protein sequence ID" value="ABL92409.1"/>
    <property type="molecule type" value="Genomic_DNA"/>
</dbReference>
<dbReference type="SMR" id="A1UHV1"/>
<dbReference type="STRING" id="189918.Mkms_3215"/>
<dbReference type="KEGG" id="mkm:Mkms_3215"/>
<dbReference type="HOGENOM" id="CLU_013528_0_0_11"/>
<dbReference type="OrthoDB" id="9815130at2"/>
<dbReference type="GO" id="GO:0005829">
    <property type="term" value="C:cytosol"/>
    <property type="evidence" value="ECO:0007669"/>
    <property type="project" value="TreeGrafter"/>
</dbReference>
<dbReference type="GO" id="GO:0005524">
    <property type="term" value="F:ATP binding"/>
    <property type="evidence" value="ECO:0007669"/>
    <property type="project" value="UniProtKB-KW"/>
</dbReference>
<dbReference type="GO" id="GO:0035446">
    <property type="term" value="F:cysteine-glucosaminylinositol ligase activity"/>
    <property type="evidence" value="ECO:0007669"/>
    <property type="project" value="UniProtKB-UniRule"/>
</dbReference>
<dbReference type="GO" id="GO:0004817">
    <property type="term" value="F:cysteine-tRNA ligase activity"/>
    <property type="evidence" value="ECO:0007669"/>
    <property type="project" value="TreeGrafter"/>
</dbReference>
<dbReference type="GO" id="GO:0008270">
    <property type="term" value="F:zinc ion binding"/>
    <property type="evidence" value="ECO:0007669"/>
    <property type="project" value="UniProtKB-UniRule"/>
</dbReference>
<dbReference type="GO" id="GO:0006423">
    <property type="term" value="P:cysteinyl-tRNA aminoacylation"/>
    <property type="evidence" value="ECO:0007669"/>
    <property type="project" value="TreeGrafter"/>
</dbReference>
<dbReference type="GO" id="GO:0010125">
    <property type="term" value="P:mycothiol biosynthetic process"/>
    <property type="evidence" value="ECO:0007669"/>
    <property type="project" value="UniProtKB-UniRule"/>
</dbReference>
<dbReference type="CDD" id="cd07955">
    <property type="entry name" value="Anticodon_Ia_Cys_like"/>
    <property type="match status" value="1"/>
</dbReference>
<dbReference type="CDD" id="cd00672">
    <property type="entry name" value="CysRS_core"/>
    <property type="match status" value="1"/>
</dbReference>
<dbReference type="FunFam" id="3.40.50.620:FF:000134">
    <property type="entry name" value="L-cysteine:1D-myo-inositol 2-amino-2-deoxy-alpha-D-glucopyranoside ligase"/>
    <property type="match status" value="1"/>
</dbReference>
<dbReference type="Gene3D" id="1.20.120.640">
    <property type="entry name" value="Anticodon-binding domain of a subclass of class I aminoacyl-tRNA synthetases"/>
    <property type="match status" value="1"/>
</dbReference>
<dbReference type="Gene3D" id="3.40.50.620">
    <property type="entry name" value="HUPs"/>
    <property type="match status" value="1"/>
</dbReference>
<dbReference type="HAMAP" id="MF_01697">
    <property type="entry name" value="MshC"/>
    <property type="match status" value="1"/>
</dbReference>
<dbReference type="InterPro" id="IPR024909">
    <property type="entry name" value="Cys-tRNA/MSH_ligase"/>
</dbReference>
<dbReference type="InterPro" id="IPR017812">
    <property type="entry name" value="Mycothiol_ligase_MshC"/>
</dbReference>
<dbReference type="InterPro" id="IPR014729">
    <property type="entry name" value="Rossmann-like_a/b/a_fold"/>
</dbReference>
<dbReference type="InterPro" id="IPR032678">
    <property type="entry name" value="tRNA-synt_1_cat_dom"/>
</dbReference>
<dbReference type="NCBIfam" id="TIGR03447">
    <property type="entry name" value="mycothiol_MshC"/>
    <property type="match status" value="1"/>
</dbReference>
<dbReference type="PANTHER" id="PTHR10890:SF3">
    <property type="entry name" value="CYSTEINE--TRNA LIGASE, CYTOPLASMIC"/>
    <property type="match status" value="1"/>
</dbReference>
<dbReference type="PANTHER" id="PTHR10890">
    <property type="entry name" value="CYSTEINYL-TRNA SYNTHETASE"/>
    <property type="match status" value="1"/>
</dbReference>
<dbReference type="Pfam" id="PF01406">
    <property type="entry name" value="tRNA-synt_1e"/>
    <property type="match status" value="1"/>
</dbReference>
<dbReference type="PRINTS" id="PR00983">
    <property type="entry name" value="TRNASYNTHCYS"/>
</dbReference>
<dbReference type="SUPFAM" id="SSF52374">
    <property type="entry name" value="Nucleotidylyl transferase"/>
    <property type="match status" value="1"/>
</dbReference>
<name>MSHC_MYCSK</name>
<keyword id="KW-0067">ATP-binding</keyword>
<keyword id="KW-0436">Ligase</keyword>
<keyword id="KW-0479">Metal-binding</keyword>
<keyword id="KW-0547">Nucleotide-binding</keyword>
<keyword id="KW-0862">Zinc</keyword>